<proteinExistence type="evidence at transcript level"/>
<keyword id="KW-0217">Developmental protein</keyword>
<keyword id="KW-0238">DNA-binding</keyword>
<keyword id="KW-0371">Homeobox</keyword>
<keyword id="KW-0524">Neurogenesis</keyword>
<keyword id="KW-0539">Nucleus</keyword>
<keyword id="KW-1185">Reference proteome</keyword>
<keyword id="KW-0804">Transcription</keyword>
<keyword id="KW-0805">Transcription regulation</keyword>
<reference evidence="9" key="1">
    <citation type="submission" date="2006-10" db="EMBL/GenBank/DDBJ databases">
        <authorList>
            <consortium name="Sanger Xenopus tropicalis EST/cDNA project"/>
        </authorList>
    </citation>
    <scope>NUCLEOTIDE SEQUENCE [LARGE SCALE MRNA]</scope>
    <source>
        <tissue evidence="9">Tadpole</tissue>
    </source>
</reference>
<reference evidence="9" key="2">
    <citation type="submission" date="2005-06" db="EMBL/GenBank/DDBJ databases">
        <authorList>
            <consortium name="NIH - Xenopus Gene Collection (XGC) project"/>
        </authorList>
    </citation>
    <scope>NUCLEOTIDE SEQUENCE [LARGE SCALE MRNA]</scope>
    <source>
        <strain evidence="8">F6</strain>
    </source>
</reference>
<sequence length="375" mass="41846">MAATAQYLPRNNSLPSNPLMHPDSDRMHQGTTYREVQKMMHQEYLQGLATNAGHPMSLTHHQWLPNPASDWGSGSHLGAQAEHGKSGVQSSREDLSSSFHHHRSHLVHQQTPSSHAWAQSGGHHLPPMSPGSNSHQPLIYSQSSYTNLNGMLGPQASSLHHSMRDPLHDDPGVLDTHVESPPQHLSHHQDHSDEDAPSSDDLEQFAKQFKQRRIKLGFTQADVGLALGTLYGNVFSQTTICRFEALQLSFKNMCKLKPLLNKWLEETDSTTGSPTNLDKIAAQGRKRKKRTSIEVGVKGALENHFLKCPKPSAHEITSLADSLQLEKEVVRVWFCNRRQKEKRMTPAGVPHPPMEDVYSQAETPPLHHTLQTSVQ</sequence>
<evidence type="ECO:0000250" key="1">
    <source>
        <dbReference type="UniProtKB" id="P21952"/>
    </source>
</evidence>
<evidence type="ECO:0000250" key="2">
    <source>
        <dbReference type="UniProtKB" id="P31361"/>
    </source>
</evidence>
<evidence type="ECO:0000250" key="3">
    <source>
        <dbReference type="UniProtKB" id="P31363"/>
    </source>
</evidence>
<evidence type="ECO:0000255" key="4"/>
<evidence type="ECO:0000255" key="5">
    <source>
        <dbReference type="PROSITE-ProRule" id="PRU00108"/>
    </source>
</evidence>
<evidence type="ECO:0000255" key="6">
    <source>
        <dbReference type="PROSITE-ProRule" id="PRU00530"/>
    </source>
</evidence>
<evidence type="ECO:0000256" key="7">
    <source>
        <dbReference type="SAM" id="MobiDB-lite"/>
    </source>
</evidence>
<evidence type="ECO:0000312" key="8">
    <source>
        <dbReference type="EMBL" id="AAH98088.1"/>
    </source>
</evidence>
<evidence type="ECO:0000312" key="9">
    <source>
        <dbReference type="EMBL" id="CAJ82966.1"/>
    </source>
</evidence>
<comment type="function">
    <text evidence="1 3">Acts as a transcription factor (By similarity). May play a role in neuronal differentiation (By similarity).</text>
</comment>
<comment type="subcellular location">
    <subcellularLocation>
        <location evidence="2 5 6">Nucleus</location>
    </subcellularLocation>
</comment>
<comment type="similarity">
    <text evidence="4">Belongs to the POU transcription factor family. Class-3 subfamily.</text>
</comment>
<accession>Q4QQQ7</accession>
<protein>
    <recommendedName>
        <fullName evidence="9">POU domain, class 3, transcription factor 1</fullName>
    </recommendedName>
</protein>
<dbReference type="EMBL" id="CR760792">
    <property type="protein sequence ID" value="CAJ82966.1"/>
    <property type="molecule type" value="mRNA"/>
</dbReference>
<dbReference type="EMBL" id="BC098088">
    <property type="protein sequence ID" value="AAH98088.1"/>
    <property type="molecule type" value="mRNA"/>
</dbReference>
<dbReference type="RefSeq" id="NP_001016504.1">
    <property type="nucleotide sequence ID" value="NM_001016504.2"/>
</dbReference>
<dbReference type="SMR" id="Q4QQQ7"/>
<dbReference type="FunCoup" id="Q4QQQ7">
    <property type="interactions" value="1316"/>
</dbReference>
<dbReference type="PaxDb" id="8364-ENSXETP00000025161"/>
<dbReference type="DNASU" id="549258"/>
<dbReference type="GeneID" id="549258"/>
<dbReference type="KEGG" id="xtr:549258"/>
<dbReference type="AGR" id="Xenbase:XB-GENE-853354"/>
<dbReference type="CTD" id="5453"/>
<dbReference type="Xenbase" id="XB-GENE-853354">
    <property type="gene designation" value="pou3f1"/>
</dbReference>
<dbReference type="eggNOG" id="KOG3802">
    <property type="taxonomic scope" value="Eukaryota"/>
</dbReference>
<dbReference type="HOGENOM" id="CLU_013065_1_2_1"/>
<dbReference type="InParanoid" id="Q4QQQ7"/>
<dbReference type="OMA" id="AHHGSWA"/>
<dbReference type="OrthoDB" id="6358449at2759"/>
<dbReference type="PhylomeDB" id="Q4QQQ7"/>
<dbReference type="TreeFam" id="TF316413"/>
<dbReference type="Proteomes" id="UP000008143">
    <property type="component" value="Chromosome 2"/>
</dbReference>
<dbReference type="Bgee" id="ENSXETG00000011510">
    <property type="expression patterns" value="Expressed in neurula embryo and 8 other cell types or tissues"/>
</dbReference>
<dbReference type="GO" id="GO:0005634">
    <property type="term" value="C:nucleus"/>
    <property type="evidence" value="ECO:0007669"/>
    <property type="project" value="UniProtKB-SubCell"/>
</dbReference>
<dbReference type="GO" id="GO:0003677">
    <property type="term" value="F:DNA binding"/>
    <property type="evidence" value="ECO:0007669"/>
    <property type="project" value="UniProtKB-KW"/>
</dbReference>
<dbReference type="GO" id="GO:0000981">
    <property type="term" value="F:DNA-binding transcription factor activity, RNA polymerase II-specific"/>
    <property type="evidence" value="ECO:0007669"/>
    <property type="project" value="InterPro"/>
</dbReference>
<dbReference type="GO" id="GO:0007420">
    <property type="term" value="P:brain development"/>
    <property type="evidence" value="ECO:0007669"/>
    <property type="project" value="InterPro"/>
</dbReference>
<dbReference type="CDD" id="cd00086">
    <property type="entry name" value="homeodomain"/>
    <property type="match status" value="1"/>
</dbReference>
<dbReference type="FunFam" id="1.10.10.60:FF:000005">
    <property type="entry name" value="POU domain protein"/>
    <property type="match status" value="1"/>
</dbReference>
<dbReference type="FunFam" id="1.10.260.40:FF:000001">
    <property type="entry name" value="POU domain protein"/>
    <property type="match status" value="1"/>
</dbReference>
<dbReference type="Gene3D" id="1.10.10.60">
    <property type="entry name" value="Homeodomain-like"/>
    <property type="match status" value="1"/>
</dbReference>
<dbReference type="Gene3D" id="1.10.260.40">
    <property type="entry name" value="lambda repressor-like DNA-binding domains"/>
    <property type="match status" value="1"/>
</dbReference>
<dbReference type="InterPro" id="IPR001356">
    <property type="entry name" value="HD"/>
</dbReference>
<dbReference type="InterPro" id="IPR017970">
    <property type="entry name" value="Homeobox_CS"/>
</dbReference>
<dbReference type="InterPro" id="IPR009057">
    <property type="entry name" value="Homeodomain-like_sf"/>
</dbReference>
<dbReference type="InterPro" id="IPR010982">
    <property type="entry name" value="Lambda_DNA-bd_dom_sf"/>
</dbReference>
<dbReference type="InterPro" id="IPR013847">
    <property type="entry name" value="POU"/>
</dbReference>
<dbReference type="InterPro" id="IPR000327">
    <property type="entry name" value="POU_dom"/>
</dbReference>
<dbReference type="InterPro" id="IPR050255">
    <property type="entry name" value="POU_domain_TF"/>
</dbReference>
<dbReference type="InterPro" id="IPR016362">
    <property type="entry name" value="TF_POU_3"/>
</dbReference>
<dbReference type="PANTHER" id="PTHR11636">
    <property type="entry name" value="POU DOMAIN"/>
    <property type="match status" value="1"/>
</dbReference>
<dbReference type="PANTHER" id="PTHR11636:SF75">
    <property type="entry name" value="POU DOMAIN, CLASS 3, TRANSCRIPTION FACTOR 1"/>
    <property type="match status" value="1"/>
</dbReference>
<dbReference type="Pfam" id="PF00046">
    <property type="entry name" value="Homeodomain"/>
    <property type="match status" value="1"/>
</dbReference>
<dbReference type="Pfam" id="PF00157">
    <property type="entry name" value="Pou"/>
    <property type="match status" value="1"/>
</dbReference>
<dbReference type="PIRSF" id="PIRSF002629">
    <property type="entry name" value="Transcription_factor_POU"/>
    <property type="match status" value="1"/>
</dbReference>
<dbReference type="PRINTS" id="PR00028">
    <property type="entry name" value="POUDOMAIN"/>
</dbReference>
<dbReference type="SMART" id="SM00389">
    <property type="entry name" value="HOX"/>
    <property type="match status" value="1"/>
</dbReference>
<dbReference type="SMART" id="SM00352">
    <property type="entry name" value="POU"/>
    <property type="match status" value="1"/>
</dbReference>
<dbReference type="SUPFAM" id="SSF46689">
    <property type="entry name" value="Homeodomain-like"/>
    <property type="match status" value="1"/>
</dbReference>
<dbReference type="SUPFAM" id="SSF47413">
    <property type="entry name" value="lambda repressor-like DNA-binding domains"/>
    <property type="match status" value="1"/>
</dbReference>
<dbReference type="PROSITE" id="PS00027">
    <property type="entry name" value="HOMEOBOX_1"/>
    <property type="match status" value="1"/>
</dbReference>
<dbReference type="PROSITE" id="PS50071">
    <property type="entry name" value="HOMEOBOX_2"/>
    <property type="match status" value="1"/>
</dbReference>
<dbReference type="PROSITE" id="PS00035">
    <property type="entry name" value="POU_1"/>
    <property type="match status" value="1"/>
</dbReference>
<dbReference type="PROSITE" id="PS00465">
    <property type="entry name" value="POU_2"/>
    <property type="match status" value="1"/>
</dbReference>
<dbReference type="PROSITE" id="PS51179">
    <property type="entry name" value="POU_3"/>
    <property type="match status" value="1"/>
</dbReference>
<gene>
    <name evidence="8" type="primary">pou3f1</name>
    <name type="ORF">TTpA009b07.1</name>
</gene>
<organism>
    <name type="scientific">Xenopus tropicalis</name>
    <name type="common">Western clawed frog</name>
    <name type="synonym">Silurana tropicalis</name>
    <dbReference type="NCBI Taxonomy" id="8364"/>
    <lineage>
        <taxon>Eukaryota</taxon>
        <taxon>Metazoa</taxon>
        <taxon>Chordata</taxon>
        <taxon>Craniata</taxon>
        <taxon>Vertebrata</taxon>
        <taxon>Euteleostomi</taxon>
        <taxon>Amphibia</taxon>
        <taxon>Batrachia</taxon>
        <taxon>Anura</taxon>
        <taxon>Pipoidea</taxon>
        <taxon>Pipidae</taxon>
        <taxon>Xenopodinae</taxon>
        <taxon>Xenopus</taxon>
        <taxon>Silurana</taxon>
    </lineage>
</organism>
<feature type="chain" id="PRO_0000389615" description="POU domain, class 3, transcription factor 1">
    <location>
        <begin position="1"/>
        <end position="375"/>
    </location>
</feature>
<feature type="domain" description="POU-specific" evidence="6">
    <location>
        <begin position="194"/>
        <end position="268"/>
    </location>
</feature>
<feature type="DNA-binding region" description="Homeobox" evidence="5">
    <location>
        <begin position="286"/>
        <end position="345"/>
    </location>
</feature>
<feature type="region of interest" description="Disordered" evidence="7">
    <location>
        <begin position="1"/>
        <end position="29"/>
    </location>
</feature>
<feature type="region of interest" description="Disordered" evidence="7">
    <location>
        <begin position="56"/>
        <end position="139"/>
    </location>
</feature>
<feature type="region of interest" description="Disordered" evidence="7">
    <location>
        <begin position="151"/>
        <end position="200"/>
    </location>
</feature>
<feature type="compositionally biased region" description="Polar residues" evidence="7">
    <location>
        <begin position="107"/>
        <end position="117"/>
    </location>
</feature>
<feature type="compositionally biased region" description="Polar residues" evidence="7">
    <location>
        <begin position="130"/>
        <end position="139"/>
    </location>
</feature>
<feature type="compositionally biased region" description="Polar residues" evidence="7">
    <location>
        <begin position="151"/>
        <end position="160"/>
    </location>
</feature>
<feature type="compositionally biased region" description="Basic and acidic residues" evidence="7">
    <location>
        <begin position="162"/>
        <end position="171"/>
    </location>
</feature>
<name>PO3F1_XENTR</name>